<dbReference type="EC" id="2.3.1.180" evidence="1 2"/>
<dbReference type="EC" id="2.3.1.300" evidence="2"/>
<dbReference type="EMBL" id="AF293442">
    <property type="protein sequence ID" value="AAG30195.1"/>
    <property type="molecule type" value="Genomic_DNA"/>
</dbReference>
<dbReference type="PDB" id="1MZJ">
    <property type="method" value="X-ray"/>
    <property type="resolution" value="2.10 A"/>
    <property type="chains" value="A/B=1-339"/>
</dbReference>
<dbReference type="PDBsum" id="1MZJ"/>
<dbReference type="SMR" id="Q9F6D4"/>
<dbReference type="DrugBank" id="DB01992">
    <property type="generic name" value="Coenzyme A"/>
</dbReference>
<dbReference type="UniPathway" id="UPA00094"/>
<dbReference type="EvolutionaryTrace" id="Q9F6D4"/>
<dbReference type="GO" id="GO:0005737">
    <property type="term" value="C:cytoplasm"/>
    <property type="evidence" value="ECO:0007669"/>
    <property type="project" value="UniProtKB-SubCell"/>
</dbReference>
<dbReference type="GO" id="GO:0004315">
    <property type="term" value="F:3-oxoacyl-[acyl-carrier-protein] synthase activity"/>
    <property type="evidence" value="ECO:0007669"/>
    <property type="project" value="InterPro"/>
</dbReference>
<dbReference type="GO" id="GO:0033818">
    <property type="term" value="F:beta-ketoacyl-acyl-carrier-protein synthase III activity"/>
    <property type="evidence" value="ECO:0007669"/>
    <property type="project" value="UniProtKB-UniRule"/>
</dbReference>
<dbReference type="GO" id="GO:0006633">
    <property type="term" value="P:fatty acid biosynthetic process"/>
    <property type="evidence" value="ECO:0007669"/>
    <property type="project" value="UniProtKB-UniRule"/>
</dbReference>
<dbReference type="GO" id="GO:0044550">
    <property type="term" value="P:secondary metabolite biosynthetic process"/>
    <property type="evidence" value="ECO:0007669"/>
    <property type="project" value="TreeGrafter"/>
</dbReference>
<dbReference type="CDD" id="cd00830">
    <property type="entry name" value="KAS_III"/>
    <property type="match status" value="1"/>
</dbReference>
<dbReference type="Gene3D" id="3.40.47.10">
    <property type="match status" value="2"/>
</dbReference>
<dbReference type="HAMAP" id="MF_01815">
    <property type="entry name" value="FabH"/>
    <property type="match status" value="1"/>
</dbReference>
<dbReference type="InterPro" id="IPR013747">
    <property type="entry name" value="ACP_syn_III_C"/>
</dbReference>
<dbReference type="InterPro" id="IPR013751">
    <property type="entry name" value="ACP_syn_III_N"/>
</dbReference>
<dbReference type="InterPro" id="IPR004655">
    <property type="entry name" value="FabH"/>
</dbReference>
<dbReference type="InterPro" id="IPR016039">
    <property type="entry name" value="Thiolase-like"/>
</dbReference>
<dbReference type="NCBIfam" id="TIGR00747">
    <property type="entry name" value="fabH"/>
    <property type="match status" value="1"/>
</dbReference>
<dbReference type="NCBIfam" id="NF006829">
    <property type="entry name" value="PRK09352.1"/>
    <property type="match status" value="1"/>
</dbReference>
<dbReference type="PANTHER" id="PTHR34069">
    <property type="entry name" value="3-OXOACYL-[ACYL-CARRIER-PROTEIN] SYNTHASE 3"/>
    <property type="match status" value="1"/>
</dbReference>
<dbReference type="PANTHER" id="PTHR34069:SF2">
    <property type="entry name" value="BETA-KETOACYL-[ACYL-CARRIER-PROTEIN] SYNTHASE III"/>
    <property type="match status" value="1"/>
</dbReference>
<dbReference type="Pfam" id="PF08545">
    <property type="entry name" value="ACP_syn_III"/>
    <property type="match status" value="1"/>
</dbReference>
<dbReference type="Pfam" id="PF08541">
    <property type="entry name" value="ACP_syn_III_C"/>
    <property type="match status" value="1"/>
</dbReference>
<dbReference type="SUPFAM" id="SSF53901">
    <property type="entry name" value="Thiolase-like"/>
    <property type="match status" value="1"/>
</dbReference>
<comment type="function">
    <text evidence="2">Catalyzes the condensation reaction of fatty acid synthesis by the addition to an acyl acceptor of two carbons from malonyl-ACP. Catalyzes the first condensation reaction which initiates fatty acid synthesis and may therefore play a role in governing the total rate of fatty acid production. Possesses both acetoacetyl-ACP synthase and acetyl transacylase activities (PubMed:11732905). Propionyl-CoA and isobutyryl-CoA were the two most preferred substrates, although acetyl-CoA and butyryl-CoA could also be accepted and elongated (PubMed:11732905). Involved in the biosynthesis of R1128 polyketide (PubMed:11732905).</text>
</comment>
<comment type="catalytic activity">
    <reaction evidence="2">
        <text>malonyl-[ACP] + propanoyl-CoA + H(+) = 3-oxopentanoyl-[ACP] + CO2 + CoA</text>
        <dbReference type="Rhea" id="RHEA:42244"/>
        <dbReference type="Rhea" id="RHEA-COMP:9623"/>
        <dbReference type="Rhea" id="RHEA-COMP:9939"/>
        <dbReference type="ChEBI" id="CHEBI:15378"/>
        <dbReference type="ChEBI" id="CHEBI:16526"/>
        <dbReference type="ChEBI" id="CHEBI:57287"/>
        <dbReference type="ChEBI" id="CHEBI:57392"/>
        <dbReference type="ChEBI" id="CHEBI:78449"/>
        <dbReference type="ChEBI" id="CHEBI:78818"/>
    </reaction>
    <physiologicalReaction direction="left-to-right" evidence="2">
        <dbReference type="Rhea" id="RHEA:42245"/>
    </physiologicalReaction>
</comment>
<comment type="catalytic activity">
    <reaction evidence="2">
        <text>2-methylpropanoyl-CoA + malonyl-[ACP] + H(+) = 4-methyl-3-oxopentanoyl-[ACP] + CO2 + CoA</text>
        <dbReference type="Rhea" id="RHEA:42268"/>
        <dbReference type="Rhea" id="RHEA-COMP:9623"/>
        <dbReference type="Rhea" id="RHEA-COMP:9940"/>
        <dbReference type="ChEBI" id="CHEBI:15378"/>
        <dbReference type="ChEBI" id="CHEBI:16526"/>
        <dbReference type="ChEBI" id="CHEBI:57287"/>
        <dbReference type="ChEBI" id="CHEBI:57338"/>
        <dbReference type="ChEBI" id="CHEBI:78449"/>
        <dbReference type="ChEBI" id="CHEBI:78820"/>
        <dbReference type="EC" id="2.3.1.300"/>
    </reaction>
    <physiologicalReaction direction="left-to-right" evidence="2">
        <dbReference type="Rhea" id="RHEA:42269"/>
    </physiologicalReaction>
</comment>
<comment type="catalytic activity">
    <reaction evidence="1 2">
        <text>malonyl-[ACP] + acetyl-CoA + H(+) = 3-oxobutanoyl-[ACP] + CO2 + CoA</text>
        <dbReference type="Rhea" id="RHEA:12080"/>
        <dbReference type="Rhea" id="RHEA-COMP:9623"/>
        <dbReference type="Rhea" id="RHEA-COMP:9625"/>
        <dbReference type="ChEBI" id="CHEBI:15378"/>
        <dbReference type="ChEBI" id="CHEBI:16526"/>
        <dbReference type="ChEBI" id="CHEBI:57287"/>
        <dbReference type="ChEBI" id="CHEBI:57288"/>
        <dbReference type="ChEBI" id="CHEBI:78449"/>
        <dbReference type="ChEBI" id="CHEBI:78450"/>
        <dbReference type="EC" id="2.3.1.180"/>
    </reaction>
    <physiologicalReaction direction="left-to-right" evidence="2">
        <dbReference type="Rhea" id="RHEA:12081"/>
    </physiologicalReaction>
</comment>
<comment type="catalytic activity">
    <reaction evidence="2">
        <text>butanoyl-CoA + malonyl-[ACP] + H(+) = 3-oxohexanoyl-[ACP] + CO2 + CoA</text>
        <dbReference type="Rhea" id="RHEA:42248"/>
        <dbReference type="Rhea" id="RHEA-COMP:9623"/>
        <dbReference type="Rhea" id="RHEA-COMP:9629"/>
        <dbReference type="ChEBI" id="CHEBI:15378"/>
        <dbReference type="ChEBI" id="CHEBI:16526"/>
        <dbReference type="ChEBI" id="CHEBI:57287"/>
        <dbReference type="ChEBI" id="CHEBI:57371"/>
        <dbReference type="ChEBI" id="CHEBI:78449"/>
        <dbReference type="ChEBI" id="CHEBI:78456"/>
    </reaction>
    <physiologicalReaction direction="left-to-right" evidence="2">
        <dbReference type="Rhea" id="RHEA:42249"/>
    </physiologicalReaction>
</comment>
<comment type="biophysicochemical properties">
    <kinetics>
        <KM evidence="2">26 uM for propanoyl-CoA</KM>
        <KM evidence="2">184 uM for butanoyl-CoA</KM>
        <KM evidence="2">230 uM for acetyl-CoA</KM>
        <text evidence="2">kcat is 74 min(-1) with propanoyl-CoA as substrate. kcat is 113 min(-1) with butanoyl-CoA as substrate. kcat is 58 min(-1) with acetyl-CoA as substrate.</text>
    </kinetics>
</comment>
<comment type="pathway">
    <text evidence="1">Lipid metabolism; fatty acid biosynthesis.</text>
</comment>
<comment type="subunit">
    <text evidence="1 3">Homodimer.</text>
</comment>
<comment type="subcellular location">
    <subcellularLocation>
        <location evidence="1">Cytoplasm</location>
    </subcellularLocation>
</comment>
<comment type="domain">
    <text evidence="1">The last Arg residue of the ACP-binding site is essential for the weak association between ACP/AcpP and FabH.</text>
</comment>
<comment type="similarity">
    <text evidence="1 5">Belongs to the thiolase-like superfamily. FabH family.</text>
</comment>
<proteinExistence type="evidence at protein level"/>
<name>FABH_STRLI</name>
<gene>
    <name evidence="1" type="primary">fabH</name>
    <name evidence="4" type="synonym">zhuH</name>
</gene>
<accession>Q9F6D4</accession>
<reference key="1">
    <citation type="journal article" date="2000" name="J. Biol. Chem.">
        <title>Cloning, nucleotide sequence, and heterologous expression of the biosynthetic gene cluster for R1128, a non-steroidal estrogen receptor antagonist. Insights into an unusual priming mechanism.</title>
        <authorList>
            <person name="Marti T."/>
            <person name="Hu Z."/>
            <person name="Pohl N.L."/>
            <person name="Shah A.N."/>
            <person name="Khosla C."/>
        </authorList>
    </citation>
    <scope>NUCLEOTIDE SEQUENCE [GENOMIC DNA]</scope>
</reference>
<reference key="2">
    <citation type="journal article" date="2001" name="Biochemistry">
        <title>In vitro reconstitution and analysis of the chain initiating enzymes of the R1128 polyketide synthase.</title>
        <authorList>
            <person name="Meadows E.S."/>
            <person name="Khosla C."/>
        </authorList>
    </citation>
    <scope>FUNCTION</scope>
    <scope>CATALYTIC ACTIVITY</scope>
    <scope>SUBSTRATE SPECIFICITY</scope>
    <scope>BIOPHYSICOCHEMICAL PROPERTIES</scope>
</reference>
<reference key="3">
    <citation type="journal article" date="2002" name="Structure">
        <title>Crystal structure of the priming beta-ketosynthase from the R1128 polyketide biosynthetic pathway.</title>
        <authorList>
            <person name="Pan H."/>
            <person name="Tsai S.-C."/>
            <person name="Meadows E.S."/>
            <person name="Miercke L.J.W."/>
            <person name="Keatinge-Clay A.T."/>
            <person name="O'Connell J.D. III"/>
            <person name="Khosla C."/>
            <person name="Stroud R.M."/>
        </authorList>
    </citation>
    <scope>X-RAY CRYSTALLOGRAPHY (2.1 ANGSTROMS)</scope>
    <scope>SUBUNIT</scope>
    <scope>ACTIVE SITE</scope>
</reference>
<protein>
    <recommendedName>
        <fullName evidence="1">Beta-ketoacyl-[acyl-carrier-protein] synthase III</fullName>
        <shortName evidence="1">Beta-ketoacyl-ACP synthase III</shortName>
        <shortName evidence="1">KAS III</shortName>
        <ecNumber evidence="1 2">2.3.1.180</ecNumber>
        <ecNumber evidence="2">2.3.1.300</ecNumber>
    </recommendedName>
    <alternativeName>
        <fullName evidence="1">3-oxoacyl-[acyl-carrier-protein] synthase 3</fullName>
    </alternativeName>
    <alternativeName>
        <fullName evidence="1">3-oxoacyl-[acyl-carrier-protein] synthase III</fullName>
    </alternativeName>
    <alternativeName>
        <fullName evidence="5">Branched-chain beta-ketoacyl-[acyl-carrier-protein] synthase</fullName>
    </alternativeName>
</protein>
<sequence length="339" mass="35392">MPGLRVPERRFSRVLGVGSYRPRREVSNKEVCTWIDSTEEWIETRTGIRSRRIAEPDETIQVMGVAASRRALEHAGVDPAEIDLVVVSTMTNFVHTPPLSVAIAHELGADNAGGFDLSAACAGFCHALSIAADAVESGGSRHVLVVATERMTDVIDLADRSLSFLFGDGAGAAVVGPSDVPGIGPVVRGIDGTGLGSLHMSSSWDQYVEDPSVGRPALVMDGKRVFRWAVADVVPAAREALEVAGLTVGDLVAFVPHQANLRIIDVLVDRLGVPEHVVVSRDAEDTGNTSSASVALALDRLVRSGAVPGGGPALMIGFGAGLSYAGQALLLPDPPSTPA</sequence>
<organism>
    <name type="scientific">Streptomyces lividans</name>
    <dbReference type="NCBI Taxonomy" id="1916"/>
    <lineage>
        <taxon>Bacteria</taxon>
        <taxon>Bacillati</taxon>
        <taxon>Actinomycetota</taxon>
        <taxon>Actinomycetes</taxon>
        <taxon>Kitasatosporales</taxon>
        <taxon>Streptomycetaceae</taxon>
        <taxon>Streptomyces</taxon>
    </lineage>
</organism>
<evidence type="ECO:0000255" key="1">
    <source>
        <dbReference type="HAMAP-Rule" id="MF_01815"/>
    </source>
</evidence>
<evidence type="ECO:0000269" key="2">
    <source>
    </source>
</evidence>
<evidence type="ECO:0000269" key="3">
    <source>
    </source>
</evidence>
<evidence type="ECO:0000303" key="4">
    <source>
    </source>
</evidence>
<evidence type="ECO:0000305" key="5"/>
<evidence type="ECO:0000305" key="6">
    <source>
    </source>
</evidence>
<evidence type="ECO:0007829" key="7">
    <source>
        <dbReference type="PDB" id="1MZJ"/>
    </source>
</evidence>
<feature type="chain" id="PRO_0000110489" description="Beta-ketoacyl-[acyl-carrier-protein] synthase III">
    <location>
        <begin position="1"/>
        <end position="339"/>
    </location>
</feature>
<feature type="region of interest" description="ACP-binding" evidence="1">
    <location>
        <begin position="258"/>
        <end position="262"/>
    </location>
</feature>
<feature type="active site" evidence="1 6">
    <location>
        <position position="121"/>
    </location>
</feature>
<feature type="active site" evidence="1 6">
    <location>
        <position position="257"/>
    </location>
</feature>
<feature type="active site" evidence="1 6">
    <location>
        <position position="288"/>
    </location>
</feature>
<feature type="strand" evidence="7">
    <location>
        <begin position="11"/>
        <end position="20"/>
    </location>
</feature>
<feature type="strand" evidence="7">
    <location>
        <begin position="25"/>
        <end position="27"/>
    </location>
</feature>
<feature type="helix" evidence="7">
    <location>
        <begin position="28"/>
        <end position="31"/>
    </location>
</feature>
<feature type="turn" evidence="7">
    <location>
        <begin position="32"/>
        <end position="34"/>
    </location>
</feature>
<feature type="helix" evidence="7">
    <location>
        <begin position="39"/>
        <end position="46"/>
    </location>
</feature>
<feature type="strand" evidence="7">
    <location>
        <begin position="49"/>
        <end position="52"/>
    </location>
</feature>
<feature type="helix" evidence="7">
    <location>
        <begin position="60"/>
        <end position="75"/>
    </location>
</feature>
<feature type="helix" evidence="7">
    <location>
        <begin position="79"/>
        <end position="81"/>
    </location>
</feature>
<feature type="strand" evidence="7">
    <location>
        <begin position="84"/>
        <end position="88"/>
    </location>
</feature>
<feature type="helix" evidence="7">
    <location>
        <begin position="99"/>
        <end position="107"/>
    </location>
</feature>
<feature type="strand" evidence="7">
    <location>
        <begin position="113"/>
        <end position="118"/>
    </location>
</feature>
<feature type="helix" evidence="7">
    <location>
        <begin position="120"/>
        <end position="122"/>
    </location>
</feature>
<feature type="helix" evidence="7">
    <location>
        <begin position="123"/>
        <end position="137"/>
    </location>
</feature>
<feature type="strand" evidence="7">
    <location>
        <begin position="143"/>
        <end position="150"/>
    </location>
</feature>
<feature type="helix" evidence="7">
    <location>
        <begin position="151"/>
        <end position="154"/>
    </location>
</feature>
<feature type="turn" evidence="7">
    <location>
        <begin position="160"/>
        <end position="165"/>
    </location>
</feature>
<feature type="strand" evidence="7">
    <location>
        <begin position="168"/>
        <end position="180"/>
    </location>
</feature>
<feature type="strand" evidence="7">
    <location>
        <begin position="187"/>
        <end position="190"/>
    </location>
</feature>
<feature type="helix" evidence="7">
    <location>
        <begin position="192"/>
        <end position="197"/>
    </location>
</feature>
<feature type="strand" evidence="7">
    <location>
        <begin position="198"/>
        <end position="201"/>
    </location>
</feature>
<feature type="helix" evidence="7">
    <location>
        <begin position="204"/>
        <end position="207"/>
    </location>
</feature>
<feature type="strand" evidence="7">
    <location>
        <begin position="211"/>
        <end position="213"/>
    </location>
</feature>
<feature type="strand" evidence="7">
    <location>
        <begin position="218"/>
        <end position="220"/>
    </location>
</feature>
<feature type="helix" evidence="7">
    <location>
        <begin position="222"/>
        <end position="242"/>
    </location>
</feature>
<feature type="turn" evidence="7">
    <location>
        <begin position="243"/>
        <end position="245"/>
    </location>
</feature>
<feature type="helix" evidence="7">
    <location>
        <begin position="248"/>
        <end position="250"/>
    </location>
</feature>
<feature type="strand" evidence="7">
    <location>
        <begin position="252"/>
        <end position="256"/>
    </location>
</feature>
<feature type="helix" evidence="7">
    <location>
        <begin position="261"/>
        <end position="271"/>
    </location>
</feature>
<feature type="strand" evidence="7">
    <location>
        <begin position="277"/>
        <end position="279"/>
    </location>
</feature>
<feature type="helix" evidence="7">
    <location>
        <begin position="283"/>
        <end position="286"/>
    </location>
</feature>
<feature type="helix" evidence="7">
    <location>
        <begin position="292"/>
        <end position="304"/>
    </location>
</feature>
<feature type="strand" evidence="7">
    <location>
        <begin position="305"/>
        <end position="307"/>
    </location>
</feature>
<feature type="strand" evidence="7">
    <location>
        <begin position="312"/>
        <end position="319"/>
    </location>
</feature>
<feature type="turn" evidence="7">
    <location>
        <begin position="320"/>
        <end position="322"/>
    </location>
</feature>
<feature type="strand" evidence="7">
    <location>
        <begin position="323"/>
        <end position="330"/>
    </location>
</feature>
<keyword id="KW-0002">3D-structure</keyword>
<keyword id="KW-0012">Acyltransferase</keyword>
<keyword id="KW-0963">Cytoplasm</keyword>
<keyword id="KW-0275">Fatty acid biosynthesis</keyword>
<keyword id="KW-0276">Fatty acid metabolism</keyword>
<keyword id="KW-0444">Lipid biosynthesis</keyword>
<keyword id="KW-0443">Lipid metabolism</keyword>
<keyword id="KW-0511">Multifunctional enzyme</keyword>
<keyword id="KW-0808">Transferase</keyword>